<name>FEMB_STAES</name>
<dbReference type="EC" id="2.3.2.18"/>
<dbReference type="EMBL" id="AE015929">
    <property type="protein sequence ID" value="AAO04655.1"/>
    <property type="molecule type" value="Genomic_DNA"/>
</dbReference>
<dbReference type="RefSeq" id="NP_764613.1">
    <property type="nucleotide sequence ID" value="NC_004461.1"/>
</dbReference>
<dbReference type="RefSeq" id="WP_002485777.1">
    <property type="nucleotide sequence ID" value="NC_004461.1"/>
</dbReference>
<dbReference type="SMR" id="Q8CPA8"/>
<dbReference type="KEGG" id="sep:SE_1058"/>
<dbReference type="PATRIC" id="fig|176280.10.peg.1034"/>
<dbReference type="eggNOG" id="COG2348">
    <property type="taxonomic scope" value="Bacteria"/>
</dbReference>
<dbReference type="HOGENOM" id="CLU_048411_1_0_9"/>
<dbReference type="OrthoDB" id="2173585at2"/>
<dbReference type="Proteomes" id="UP000001411">
    <property type="component" value="Chromosome"/>
</dbReference>
<dbReference type="GO" id="GO:0005737">
    <property type="term" value="C:cytoplasm"/>
    <property type="evidence" value="ECO:0007669"/>
    <property type="project" value="UniProtKB-SubCell"/>
</dbReference>
<dbReference type="GO" id="GO:0016755">
    <property type="term" value="F:aminoacyltransferase activity"/>
    <property type="evidence" value="ECO:0007669"/>
    <property type="project" value="InterPro"/>
</dbReference>
<dbReference type="GO" id="GO:0071555">
    <property type="term" value="P:cell wall organization"/>
    <property type="evidence" value="ECO:0007669"/>
    <property type="project" value="UniProtKB-KW"/>
</dbReference>
<dbReference type="GO" id="GO:0009252">
    <property type="term" value="P:peptidoglycan biosynthetic process"/>
    <property type="evidence" value="ECO:0007669"/>
    <property type="project" value="UniProtKB-KW"/>
</dbReference>
<dbReference type="GO" id="GO:0008360">
    <property type="term" value="P:regulation of cell shape"/>
    <property type="evidence" value="ECO:0007669"/>
    <property type="project" value="UniProtKB-KW"/>
</dbReference>
<dbReference type="Gene3D" id="1.20.58.90">
    <property type="match status" value="1"/>
</dbReference>
<dbReference type="Gene3D" id="3.40.630.30">
    <property type="match status" value="2"/>
</dbReference>
<dbReference type="InterPro" id="IPR016181">
    <property type="entry name" value="Acyl_CoA_acyltransferase"/>
</dbReference>
<dbReference type="InterPro" id="IPR003447">
    <property type="entry name" value="FEMABX"/>
</dbReference>
<dbReference type="InterPro" id="IPR050644">
    <property type="entry name" value="PG_Glycine_Bridge_Synth"/>
</dbReference>
<dbReference type="PANTHER" id="PTHR36174:SF2">
    <property type="entry name" value="AMINOACYLTRANSFERASE FEMA"/>
    <property type="match status" value="1"/>
</dbReference>
<dbReference type="PANTHER" id="PTHR36174">
    <property type="entry name" value="LIPID II:GLYCINE GLYCYLTRANSFERASE"/>
    <property type="match status" value="1"/>
</dbReference>
<dbReference type="Pfam" id="PF02388">
    <property type="entry name" value="FemAB"/>
    <property type="match status" value="1"/>
</dbReference>
<dbReference type="SUPFAM" id="SSF55729">
    <property type="entry name" value="Acyl-CoA N-acyltransferases (Nat)"/>
    <property type="match status" value="2"/>
</dbReference>
<dbReference type="PROSITE" id="PS51191">
    <property type="entry name" value="FEMABX"/>
    <property type="match status" value="1"/>
</dbReference>
<organism>
    <name type="scientific">Staphylococcus epidermidis (strain ATCC 12228 / FDA PCI 1200)</name>
    <dbReference type="NCBI Taxonomy" id="176280"/>
    <lineage>
        <taxon>Bacteria</taxon>
        <taxon>Bacillati</taxon>
        <taxon>Bacillota</taxon>
        <taxon>Bacilli</taxon>
        <taxon>Bacillales</taxon>
        <taxon>Staphylococcaceae</taxon>
        <taxon>Staphylococcus</taxon>
    </lineage>
</organism>
<proteinExistence type="inferred from homology"/>
<sequence length="417" mass="49357">MKFTELTVKEFENFVQNPSLESHYFQVKENIAIRESDGFQVVLLGVKDDDNRVIAASLFSKIPTMGSYVYYSNRGPVMDYSDLGLVDFYLKELDKYLHQHQCLYVKLDPYWLYQVYDKDINPLTEKNDALVNLFKSHGYDHHGFTTQYDSSSQVRWMGVLDLEGKTPASLRKEFDSQRKRNINKAINYGVKVRFLSKDEFDLFLDLYRETEARTGFASKTDDYFYNFIEHYGDKVLVPLAYIDLNEYIQHLQESLNDKENRRDDMMAKENKTDKQLKKIAELDKQIDHDKKELLQASELRQTDGEILNLASGVYFANAYEVNYFSGGSSEKYNQYMGPYAMHWHMINYCFDNGYDRYNFYGLSGDFTENSEDYGVYRFKRGFNVRIEELIGDFYKPINKVKYWLFNTLDRIRNKLKK</sequence>
<accession>Q8CPA8</accession>
<evidence type="ECO:0000250" key="1"/>
<evidence type="ECO:0000305" key="2"/>
<comment type="function">
    <text evidence="1">Catalyzes the incorporation of amino acid(s) into the interchain peptide bridge of peptidoglycan, using aminoacyl-tRNA as amino acid donor.</text>
</comment>
<comment type="catalytic activity">
    <reaction>
        <text>MurNAc-L-Ala-D-isoglutaminyl-L-Lys-(N(6)-tri-Gly)-D-Ala-D-Ala-diphospho-di-trans,octa-cis-undecaprenyl-GlcNAc + 2 glycyl-tRNA(Gly) = MurNAc-L-Ala-D-isoglutaminyl-L-Lys-(N(6)-penta-Gly)-D-Ala-D-Ala-diphospho-di-trans,octa-cis-undecaprenyl-GlcNAc + 2 tRNA(Gly) + 2 H(+)</text>
        <dbReference type="Rhea" id="RHEA:30443"/>
        <dbReference type="Rhea" id="RHEA-COMP:9664"/>
        <dbReference type="Rhea" id="RHEA-COMP:9683"/>
        <dbReference type="ChEBI" id="CHEBI:15378"/>
        <dbReference type="ChEBI" id="CHEBI:62235"/>
        <dbReference type="ChEBI" id="CHEBI:62236"/>
        <dbReference type="ChEBI" id="CHEBI:78442"/>
        <dbReference type="ChEBI" id="CHEBI:78522"/>
        <dbReference type="EC" id="2.3.2.18"/>
    </reaction>
</comment>
<comment type="subcellular location">
    <subcellularLocation>
        <location evidence="1">Cytoplasm</location>
    </subcellularLocation>
</comment>
<comment type="similarity">
    <text evidence="2">Belongs to the FemABX family.</text>
</comment>
<protein>
    <recommendedName>
        <fullName>Aminoacyltransferase FemB</fullName>
        <ecNumber>2.3.2.18</ecNumber>
    </recommendedName>
    <alternativeName>
        <fullName>Factor essential for expression of methicillin resistance B</fullName>
    </alternativeName>
    <alternativeName>
        <fullName>N-acetylmuramoyl-L-alanyl-D-glutamyl-L-lysyl-(N6-triglycine)-D-alanyl-D-alanine-diphosphoundecaprenyl-N-acetylglucosamine:glycine glycyltransferase</fullName>
    </alternativeName>
</protein>
<reference key="1">
    <citation type="journal article" date="2003" name="Mol. Microbiol.">
        <title>Genome-based analysis of virulence genes in a non-biofilm-forming Staphylococcus epidermidis strain (ATCC 12228).</title>
        <authorList>
            <person name="Zhang Y.-Q."/>
            <person name="Ren S.-X."/>
            <person name="Li H.-L."/>
            <person name="Wang Y.-X."/>
            <person name="Fu G."/>
            <person name="Yang J."/>
            <person name="Qin Z.-Q."/>
            <person name="Miao Y.-G."/>
            <person name="Wang W.-Y."/>
            <person name="Chen R.-S."/>
            <person name="Shen Y."/>
            <person name="Chen Z."/>
            <person name="Yuan Z.-H."/>
            <person name="Zhao G.-P."/>
            <person name="Qu D."/>
            <person name="Danchin A."/>
            <person name="Wen Y.-M."/>
        </authorList>
    </citation>
    <scope>NUCLEOTIDE SEQUENCE [LARGE SCALE GENOMIC DNA]</scope>
    <source>
        <strain>ATCC 12228 / FDA PCI 1200</strain>
    </source>
</reference>
<gene>
    <name type="primary">femB</name>
    <name type="ordered locus">SE_1058</name>
</gene>
<feature type="chain" id="PRO_0000204745" description="Aminoacyltransferase FemB">
    <location>
        <begin position="1"/>
        <end position="417"/>
    </location>
</feature>
<keyword id="KW-0012">Acyltransferase</keyword>
<keyword id="KW-0133">Cell shape</keyword>
<keyword id="KW-0961">Cell wall biogenesis/degradation</keyword>
<keyword id="KW-0963">Cytoplasm</keyword>
<keyword id="KW-0573">Peptidoglycan synthesis</keyword>
<keyword id="KW-0808">Transferase</keyword>